<keyword id="KW-0002">3D-structure</keyword>
<keyword id="KW-0051">Antiviral defense</keyword>
<keyword id="KW-0460">Magnesium</keyword>
<keyword id="KW-0479">Metal-binding</keyword>
<keyword id="KW-0546">Nucleotide metabolism</keyword>
<keyword id="KW-0547">Nucleotide-binding</keyword>
<keyword id="KW-0548">Nucleotidyltransferase</keyword>
<keyword id="KW-1185">Reference proteome</keyword>
<keyword id="KW-0808">Transferase</keyword>
<name>CDNE_CECL9</name>
<proteinExistence type="evidence at protein level"/>
<organism>
    <name type="scientific">Cecembia lonarensis (strain CCUG 58316 / KCTC 22772 / LW9)</name>
    <dbReference type="NCBI Taxonomy" id="1225176"/>
    <lineage>
        <taxon>Bacteria</taxon>
        <taxon>Pseudomonadati</taxon>
        <taxon>Bacteroidota</taxon>
        <taxon>Cytophagia</taxon>
        <taxon>Cytophagales</taxon>
        <taxon>Cyclobacteriaceae</taxon>
        <taxon>Cecembia</taxon>
    </lineage>
</organism>
<comment type="function">
    <text evidence="4 8 9">Cyclic nucleotide synthase (second messenger synthase) of a CBASS antivirus system (PubMed:37604815). CBASS (cyclic oligonucleotide-based antiphage signaling system) provides immunity against bacteriophage. The CD-NTase protein synthesizes cyclic nucleotides in response to infection; these serve as specific second messenger signals. The signals activate a diverse range of effectors, leading to bacterial cell death and thus abortive phage infection (Probable). A type I-B(UU) CBASS system (PubMed:32839535).</text>
</comment>
<comment type="catalytic activity">
    <reaction evidence="2">
        <text>2 UTP = c-di-UMP + 2 diphosphate</text>
        <dbReference type="Rhea" id="RHEA:60480"/>
        <dbReference type="ChEBI" id="CHEBI:33019"/>
        <dbReference type="ChEBI" id="CHEBI:46398"/>
        <dbReference type="ChEBI" id="CHEBI:143807"/>
    </reaction>
</comment>
<comment type="catalytic activity">
    <reaction evidence="2">
        <text>UTP + CTP = cyclic CMP-UMP + 2 diphosphate</text>
        <dbReference type="Rhea" id="RHEA:60484"/>
        <dbReference type="ChEBI" id="CHEBI:33019"/>
        <dbReference type="ChEBI" id="CHEBI:37563"/>
        <dbReference type="ChEBI" id="CHEBI:46398"/>
        <dbReference type="ChEBI" id="CHEBI:143811"/>
    </reaction>
</comment>
<comment type="cofactor">
    <cofactor evidence="4">
        <name>Mg(2+)</name>
        <dbReference type="ChEBI" id="CHEBI:18420"/>
    </cofactor>
    <text evidence="4">Binds 2 Mg(2+) ions per subunit; only 1 is seen in the crystal structures (PubMed:37604815).</text>
</comment>
<comment type="subunit">
    <text evidence="9">Monomer.</text>
</comment>
<comment type="domain">
    <text evidence="9">The (R/Q)xW motif controls pyrimidine nucleotide specificity in the donor pocket, while conserved Asn-169 is important for recognition of uracil in the acceptor pocket.</text>
</comment>
<comment type="similarity">
    <text evidence="7 9">Belongs to the CD-NTase family. E02 subfamily.</text>
</comment>
<gene>
    <name evidence="6" type="primary">cdnE</name>
    <name evidence="10" type="ORF">B879_03742</name>
</gene>
<accession>K1KYT0</accession>
<protein>
    <recommendedName>
        <fullName evidence="6">Cyclic dipyrimidine nucleotide synthase CdnE</fullName>
        <shortName evidence="6">ClCdnE</shortName>
        <ecNumber evidence="2">2.7.7.-</ecNumber>
    </recommendedName>
    <alternativeName>
        <fullName evidence="1">Cyclic CMP-UMP synthase</fullName>
    </alternativeName>
    <alternativeName>
        <fullName evidence="1">c-di-UMP synthase</fullName>
    </alternativeName>
    <alternativeName>
        <fullName evidence="5 6">cGAS/DncV-like nucleotidyltransferase</fullName>
        <shortName evidence="6">CD-NTase</shortName>
    </alternativeName>
</protein>
<evidence type="ECO:0000250" key="1">
    <source>
        <dbReference type="UniProtKB" id="P0DSP3"/>
    </source>
</evidence>
<evidence type="ECO:0000250" key="2">
    <source>
        <dbReference type="UniProtKB" id="P0DX98"/>
    </source>
</evidence>
<evidence type="ECO:0000256" key="3">
    <source>
        <dbReference type="SAM" id="MobiDB-lite"/>
    </source>
</evidence>
<evidence type="ECO:0000269" key="4">
    <source>
    </source>
</evidence>
<evidence type="ECO:0000303" key="5">
    <source>
    </source>
</evidence>
<evidence type="ECO:0000303" key="6">
    <source>
    </source>
</evidence>
<evidence type="ECO:0000305" key="7">
    <source>
    </source>
</evidence>
<evidence type="ECO:0000305" key="8">
    <source>
    </source>
</evidence>
<evidence type="ECO:0000305" key="9">
    <source>
    </source>
</evidence>
<evidence type="ECO:0000312" key="10">
    <source>
        <dbReference type="EMBL" id="EKB47661.1"/>
    </source>
</evidence>
<evidence type="ECO:0007744" key="11">
    <source>
        <dbReference type="PDB" id="7X4A"/>
    </source>
</evidence>
<evidence type="ECO:0007744" key="12">
    <source>
        <dbReference type="PDB" id="7X4G"/>
    </source>
</evidence>
<evidence type="ECO:0007829" key="13">
    <source>
        <dbReference type="PDB" id="7X4A"/>
    </source>
</evidence>
<evidence type="ECO:0007829" key="14">
    <source>
        <dbReference type="PDB" id="7X4G"/>
    </source>
</evidence>
<reference evidence="10" key="1">
    <citation type="journal article" date="2012" name="J. Bacteriol.">
        <title>Draft Genome Sequence of Cecembia lonarensis Strain LW9T, Isolated from Lonar Lake, a Haloalkaline Lake in India.</title>
        <authorList>
            <person name="Shivaji S."/>
            <person name="Ara S."/>
            <person name="Singh A."/>
            <person name="Pinnaka A.K."/>
        </authorList>
    </citation>
    <scope>NUCLEOTIDE SEQUENCE [LARGE SCALE GENOMIC DNA]</scope>
    <source>
        <strain>CCUG 58316 / KCTC 22772 / LW9</strain>
    </source>
</reference>
<reference key="2">
    <citation type="journal article" date="2019" name="Nature">
        <title>Bacterial cGAS-like enzymes synthesize diverse nucleotide signals.</title>
        <authorList>
            <person name="Whiteley A.T."/>
            <person name="Eaglesham J.B."/>
            <person name="de Oliveira Mann C.C."/>
            <person name="Morehouse B.R."/>
            <person name="Lowey B."/>
            <person name="Nieminen E.A."/>
            <person name="Danilchanka O."/>
            <person name="King D.S."/>
            <person name="Lee A.S.Y."/>
            <person name="Mekalanos J.J."/>
            <person name="Kranzusch P.J."/>
        </authorList>
    </citation>
    <scope>NOMENCLATURE</scope>
    <scope>SIMILARITY</scope>
</reference>
<reference key="3">
    <citation type="journal article" date="2020" name="Nat. Microbiol.">
        <title>Diversity and classification of cyclic-oligonucleotide-based anti-phage signalling systems.</title>
        <authorList>
            <person name="Millman A."/>
            <person name="Melamed S."/>
            <person name="Amitai G."/>
            <person name="Sorek R."/>
        </authorList>
    </citation>
    <scope>CLASSIFICATION AND NOMENCLATURE</scope>
</reference>
<reference evidence="11 12" key="4">
    <citation type="journal article" date="2023" name="Nat. Commun.">
        <title>Crystal structure and functional implications of cyclic di-pyrimidine-synthesizing cGAS/DncV-like nucleotidyltransferases.</title>
        <authorList>
            <person name="Yang C.S."/>
            <person name="Ko T.P."/>
            <person name="Chen C.J."/>
            <person name="Hou M.H."/>
            <person name="Wang Y.C."/>
            <person name="Chen Y."/>
        </authorList>
    </citation>
    <scope>X-RAY CRYSTALLOGRAPHY (2.21 ANGSTROMS) IN COMPLEX WITH MG(2+) AND UTP</scope>
    <scope>COFACTOR</scope>
    <scope>SUBUNIT</scope>
    <source>
        <strain>CCUG 58316 / KCTC 22772 / LW9</strain>
    </source>
</reference>
<sequence>MAKYTEDQLTSWTKPPSDSEQTKLENSEKMVREAISSDEKLSKKTIETFGQGSYANNTNVRLNSDIDINVKYSDGFYFDLPKDKSREDFGITLTSYSYEEYKDDVENALVNKFGRSEVVRKDKCITVKENSYRVETDVVPTWDYRRYSENGNYVQGTKFKTDKGIWIDNYPKQHIANGISKNNNTARRFKRLTRLHRKLRYKMIDDGGNVSDNITSFLLECLVWNVPNRIMNDYDTWTERLKQSIIYLYNNTREESSCKEWGEVSELLYLFHGGRKWTSKDVNSYMVLLWNHLEF</sequence>
<dbReference type="EC" id="2.7.7.-" evidence="2"/>
<dbReference type="EMBL" id="AMGM01000103">
    <property type="protein sequence ID" value="EKB47661.1"/>
    <property type="molecule type" value="Genomic_DNA"/>
</dbReference>
<dbReference type="RefSeq" id="WP_009186755.1">
    <property type="nucleotide sequence ID" value="NZ_AMGM01000103.1"/>
</dbReference>
<dbReference type="PDB" id="7X4A">
    <property type="method" value="X-ray"/>
    <property type="resolution" value="2.21 A"/>
    <property type="chains" value="A=1-295"/>
</dbReference>
<dbReference type="PDB" id="7X4G">
    <property type="method" value="X-ray"/>
    <property type="resolution" value="2.60 A"/>
    <property type="chains" value="A=1-295"/>
</dbReference>
<dbReference type="PDBsum" id="7X4A"/>
<dbReference type="PDBsum" id="7X4G"/>
<dbReference type="SMR" id="K1KYT0"/>
<dbReference type="PATRIC" id="fig|1225176.3.peg.3986"/>
<dbReference type="OrthoDB" id="8264173at2"/>
<dbReference type="Proteomes" id="UP000004478">
    <property type="component" value="Unassembled WGS sequence"/>
</dbReference>
<dbReference type="GO" id="GO:0046872">
    <property type="term" value="F:metal ion binding"/>
    <property type="evidence" value="ECO:0007669"/>
    <property type="project" value="UniProtKB-KW"/>
</dbReference>
<dbReference type="GO" id="GO:0000166">
    <property type="term" value="F:nucleotide binding"/>
    <property type="evidence" value="ECO:0007669"/>
    <property type="project" value="UniProtKB-KW"/>
</dbReference>
<dbReference type="GO" id="GO:0016779">
    <property type="term" value="F:nucleotidyltransferase activity"/>
    <property type="evidence" value="ECO:0007669"/>
    <property type="project" value="UniProtKB-KW"/>
</dbReference>
<dbReference type="GO" id="GO:0051607">
    <property type="term" value="P:defense response to virus"/>
    <property type="evidence" value="ECO:0007669"/>
    <property type="project" value="UniProtKB-KW"/>
</dbReference>
<dbReference type="GO" id="GO:0009117">
    <property type="term" value="P:nucleotide metabolic process"/>
    <property type="evidence" value="ECO:0007669"/>
    <property type="project" value="UniProtKB-KW"/>
</dbReference>
<dbReference type="CDD" id="cd05400">
    <property type="entry name" value="NT_2-5OAS_ClassI-CCAase"/>
    <property type="match status" value="1"/>
</dbReference>
<dbReference type="Gene3D" id="3.30.460.10">
    <property type="entry name" value="Beta Polymerase, domain 2"/>
    <property type="match status" value="1"/>
</dbReference>
<dbReference type="InterPro" id="IPR006116">
    <property type="entry name" value="NT_2-5OAS_ClassI-CCAase"/>
</dbReference>
<dbReference type="InterPro" id="IPR043519">
    <property type="entry name" value="NT_sf"/>
</dbReference>
<dbReference type="SUPFAM" id="SSF81301">
    <property type="entry name" value="Nucleotidyltransferase"/>
    <property type="match status" value="1"/>
</dbReference>
<feature type="chain" id="PRO_0000459772" description="Cyclic dipyrimidine nucleotide synthase CdnE">
    <location>
        <begin position="1"/>
        <end position="295"/>
    </location>
</feature>
<feature type="region of interest" description="Disordered" evidence="3">
    <location>
        <begin position="1"/>
        <end position="28"/>
    </location>
</feature>
<feature type="short sequence motif" description="Pyrimidine specificity motif (R/Q)xW in donor pocket" evidence="9">
    <location>
        <begin position="275"/>
        <end position="277"/>
    </location>
</feature>
<feature type="compositionally biased region" description="Polar residues" evidence="3">
    <location>
        <begin position="7"/>
        <end position="19"/>
    </location>
</feature>
<feature type="binding site" evidence="4 12">
    <location>
        <position position="51"/>
    </location>
    <ligand>
        <name>UTP</name>
        <dbReference type="ChEBI" id="CHEBI:46398"/>
        <label>acceptor</label>
    </ligand>
</feature>
<feature type="binding site" evidence="4 12">
    <location>
        <position position="53"/>
    </location>
    <ligand>
        <name>UTP</name>
        <dbReference type="ChEBI" id="CHEBI:46398"/>
        <label>donor</label>
    </ligand>
</feature>
<feature type="binding site" evidence="4 12">
    <location>
        <position position="67"/>
    </location>
    <ligand>
        <name>Mg(2+)</name>
        <dbReference type="ChEBI" id="CHEBI:18420"/>
    </ligand>
</feature>
<feature type="binding site" evidence="4 12">
    <location>
        <position position="123"/>
    </location>
    <ligand>
        <name>UTP</name>
        <dbReference type="ChEBI" id="CHEBI:46398"/>
        <label>acceptor</label>
    </ligand>
</feature>
<feature type="binding site" evidence="4 12">
    <location>
        <position position="169"/>
    </location>
    <ligand>
        <name>UTP</name>
        <dbReference type="ChEBI" id="CHEBI:46398"/>
        <label>acceptor</label>
    </ligand>
</feature>
<feature type="binding site" evidence="4 12">
    <location>
        <position position="197"/>
    </location>
    <ligand>
        <name>UTP</name>
        <dbReference type="ChEBI" id="CHEBI:46398"/>
        <label>donor</label>
    </ligand>
</feature>
<feature type="binding site" evidence="4 12">
    <location>
        <position position="217"/>
    </location>
    <ligand>
        <name>UTP</name>
        <dbReference type="ChEBI" id="CHEBI:46398"/>
        <label>donor</label>
    </ligand>
</feature>
<feature type="binding site" evidence="4 12">
    <location>
        <position position="276"/>
    </location>
    <ligand>
        <name>UTP</name>
        <dbReference type="ChEBI" id="CHEBI:46398"/>
        <label>acceptor</label>
    </ligand>
</feature>
<feature type="site" description="Important for uracil base recognition in acceptor pocket" evidence="9">
    <location>
        <position position="169"/>
    </location>
</feature>
<feature type="helix" evidence="13">
    <location>
        <begin position="6"/>
        <end position="11"/>
    </location>
</feature>
<feature type="strand" evidence="13">
    <location>
        <begin position="16"/>
        <end position="18"/>
    </location>
</feature>
<feature type="helix" evidence="13">
    <location>
        <begin position="20"/>
        <end position="36"/>
    </location>
</feature>
<feature type="helix" evidence="13">
    <location>
        <begin position="41"/>
        <end position="43"/>
    </location>
</feature>
<feature type="strand" evidence="13">
    <location>
        <begin position="46"/>
        <end position="51"/>
    </location>
</feature>
<feature type="helix" evidence="13">
    <location>
        <begin position="52"/>
        <end position="55"/>
    </location>
</feature>
<feature type="strand" evidence="13">
    <location>
        <begin position="66"/>
        <end position="79"/>
    </location>
</feature>
<feature type="helix" evidence="13">
    <location>
        <begin position="86"/>
        <end position="89"/>
    </location>
</feature>
<feature type="helix" evidence="13">
    <location>
        <begin position="98"/>
        <end position="113"/>
    </location>
</feature>
<feature type="helix" evidence="13">
    <location>
        <begin position="115"/>
        <end position="117"/>
    </location>
</feature>
<feature type="strand" evidence="13">
    <location>
        <begin position="118"/>
        <end position="120"/>
    </location>
</feature>
<feature type="strand" evidence="13">
    <location>
        <begin position="125"/>
        <end position="127"/>
    </location>
</feature>
<feature type="strand" evidence="14">
    <location>
        <begin position="131"/>
        <end position="133"/>
    </location>
</feature>
<feature type="strand" evidence="13">
    <location>
        <begin position="136"/>
        <end position="147"/>
    </location>
</feature>
<feature type="strand" evidence="13">
    <location>
        <begin position="153"/>
        <end position="160"/>
    </location>
</feature>
<feature type="strand" evidence="13">
    <location>
        <begin position="166"/>
        <end position="169"/>
    </location>
</feature>
<feature type="helix" evidence="13">
    <location>
        <begin position="171"/>
        <end position="184"/>
    </location>
</feature>
<feature type="turn" evidence="13">
    <location>
        <begin position="185"/>
        <end position="187"/>
    </location>
</feature>
<feature type="helix" evidence="13">
    <location>
        <begin position="188"/>
        <end position="205"/>
    </location>
</feature>
<feature type="helix" evidence="13">
    <location>
        <begin position="216"/>
        <end position="224"/>
    </location>
</feature>
<feature type="helix" evidence="13">
    <location>
        <begin position="228"/>
        <end position="232"/>
    </location>
</feature>
<feature type="helix" evidence="13">
    <location>
        <begin position="237"/>
        <end position="250"/>
    </location>
</feature>
<feature type="helix" evidence="13">
    <location>
        <begin position="255"/>
        <end position="257"/>
    </location>
</feature>
<feature type="turn" evidence="13">
    <location>
        <begin position="258"/>
        <end position="260"/>
    </location>
</feature>
<feature type="strand" evidence="13">
    <location>
        <begin position="266"/>
        <end position="274"/>
    </location>
</feature>
<feature type="helix" evidence="13">
    <location>
        <begin position="279"/>
        <end position="293"/>
    </location>
</feature>